<comment type="function">
    <text evidence="1 2">Core component of the TRAPP complexes which has a function of guanine nucleotide exchange factor activity for Rab1 GTPase. Plays a role in vesicular transport from endoplasmic reticulum to Golgi and autophagy (By similarity). May play a role in dendrite postsynaptic membrane trafficking (By similarity).</text>
</comment>
<comment type="subunit">
    <text evidence="1 2">Component of the multisubunit TRAPP (transport protein particle) complex, which includes at least TRAPPC2, TRAPPC2L, TRAPPC3, TRAPPC3L, TRAPPC4, TRAPPC5, TRAPPC8, TRAPPC9, TRAPPC10, TRAPPC11 and TRAPPC12 (By similarity). Interacts with SDC2 (By similarity).</text>
</comment>
<comment type="subcellular location">
    <subcellularLocation>
        <location evidence="1">Postsynaptic cell membrane</location>
    </subcellularLocation>
    <subcellularLocation>
        <location evidence="1">Golgi apparatus membrane</location>
    </subcellularLocation>
    <subcellularLocation>
        <location evidence="1">Endoplasmic reticulum</location>
    </subcellularLocation>
    <subcellularLocation>
        <location evidence="1">Vesicle</location>
    </subcellularLocation>
    <text evidence="1">Associated with postsynaptic membranes and in intracellular cisterns and vesicles (Golgi).</text>
</comment>
<comment type="similarity">
    <text evidence="3">Belongs to the TRAPP small subunits family. TRAPPC4 subfamily.</text>
</comment>
<organism>
    <name type="scientific">Pongo abelii</name>
    <name type="common">Sumatran orangutan</name>
    <name type="synonym">Pongo pygmaeus abelii</name>
    <dbReference type="NCBI Taxonomy" id="9601"/>
    <lineage>
        <taxon>Eukaryota</taxon>
        <taxon>Metazoa</taxon>
        <taxon>Chordata</taxon>
        <taxon>Craniata</taxon>
        <taxon>Vertebrata</taxon>
        <taxon>Euteleostomi</taxon>
        <taxon>Mammalia</taxon>
        <taxon>Eutheria</taxon>
        <taxon>Euarchontoglires</taxon>
        <taxon>Primates</taxon>
        <taxon>Haplorrhini</taxon>
        <taxon>Catarrhini</taxon>
        <taxon>Hominidae</taxon>
        <taxon>Pongo</taxon>
    </lineage>
</organism>
<evidence type="ECO:0000250" key="1">
    <source>
        <dbReference type="UniProtKB" id="Q9ES56"/>
    </source>
</evidence>
<evidence type="ECO:0000250" key="2">
    <source>
        <dbReference type="UniProtKB" id="Q9Y296"/>
    </source>
</evidence>
<evidence type="ECO:0000305" key="3"/>
<dbReference type="EMBL" id="CR859388">
    <property type="protein sequence ID" value="CAH91561.1"/>
    <property type="molecule type" value="mRNA"/>
</dbReference>
<dbReference type="RefSeq" id="NP_001125918.1">
    <property type="nucleotide sequence ID" value="NM_001132446.1"/>
</dbReference>
<dbReference type="BMRB" id="Q5R9J9"/>
<dbReference type="SMR" id="Q5R9J9"/>
<dbReference type="FunCoup" id="Q5R9J9">
    <property type="interactions" value="1109"/>
</dbReference>
<dbReference type="STRING" id="9601.ENSPPYP00000004523"/>
<dbReference type="Ensembl" id="ENSPPYT00000043524.1">
    <property type="protein sequence ID" value="ENSPPYP00000044734.1"/>
    <property type="gene ID" value="ENSPPYG00000033246.1"/>
</dbReference>
<dbReference type="GeneID" id="100172851"/>
<dbReference type="KEGG" id="pon:100172851"/>
<dbReference type="CTD" id="51399"/>
<dbReference type="eggNOG" id="KOG3369">
    <property type="taxonomic scope" value="Eukaryota"/>
</dbReference>
<dbReference type="GeneTree" id="ENSGT00940000153761"/>
<dbReference type="HOGENOM" id="CLU_053380_1_0_1"/>
<dbReference type="InParanoid" id="Q5R9J9"/>
<dbReference type="OMA" id="GQRDGIN"/>
<dbReference type="OrthoDB" id="246406at2759"/>
<dbReference type="TreeFam" id="TF314561"/>
<dbReference type="Proteomes" id="UP000001595">
    <property type="component" value="Chromosome 11"/>
</dbReference>
<dbReference type="GO" id="GO:0030425">
    <property type="term" value="C:dendrite"/>
    <property type="evidence" value="ECO:0007669"/>
    <property type="project" value="Ensembl"/>
</dbReference>
<dbReference type="GO" id="GO:0005783">
    <property type="term" value="C:endoplasmic reticulum"/>
    <property type="evidence" value="ECO:0007669"/>
    <property type="project" value="UniProtKB-SubCell"/>
</dbReference>
<dbReference type="GO" id="GO:0000139">
    <property type="term" value="C:Golgi membrane"/>
    <property type="evidence" value="ECO:0007669"/>
    <property type="project" value="UniProtKB-SubCell"/>
</dbReference>
<dbReference type="GO" id="GO:0005795">
    <property type="term" value="C:Golgi stack"/>
    <property type="evidence" value="ECO:0007669"/>
    <property type="project" value="Ensembl"/>
</dbReference>
<dbReference type="GO" id="GO:0098839">
    <property type="term" value="C:postsynaptic density membrane"/>
    <property type="evidence" value="ECO:0007669"/>
    <property type="project" value="Ensembl"/>
</dbReference>
<dbReference type="GO" id="GO:0048786">
    <property type="term" value="C:presynaptic active zone"/>
    <property type="evidence" value="ECO:0007669"/>
    <property type="project" value="Ensembl"/>
</dbReference>
<dbReference type="GO" id="GO:0008021">
    <property type="term" value="C:synaptic vesicle"/>
    <property type="evidence" value="ECO:0007669"/>
    <property type="project" value="Ensembl"/>
</dbReference>
<dbReference type="GO" id="GO:0030008">
    <property type="term" value="C:TRAPP complex"/>
    <property type="evidence" value="ECO:0000250"/>
    <property type="project" value="UniProtKB"/>
</dbReference>
<dbReference type="GO" id="GO:0006914">
    <property type="term" value="P:autophagy"/>
    <property type="evidence" value="ECO:0000250"/>
    <property type="project" value="UniProtKB"/>
</dbReference>
<dbReference type="GO" id="GO:0016358">
    <property type="term" value="P:dendrite development"/>
    <property type="evidence" value="ECO:0007669"/>
    <property type="project" value="Ensembl"/>
</dbReference>
<dbReference type="GO" id="GO:0006888">
    <property type="term" value="P:endoplasmic reticulum to Golgi vesicle-mediated transport"/>
    <property type="evidence" value="ECO:0000250"/>
    <property type="project" value="UniProtKB"/>
</dbReference>
<dbReference type="CDD" id="cd14856">
    <property type="entry name" value="TRAPPC4_synbindin"/>
    <property type="match status" value="1"/>
</dbReference>
<dbReference type="FunFam" id="3.30.450.70:FF:000002">
    <property type="entry name" value="Trafficking protein particle complex subunit 4"/>
    <property type="match status" value="1"/>
</dbReference>
<dbReference type="Gene3D" id="3.30.450.70">
    <property type="match status" value="1"/>
</dbReference>
<dbReference type="InterPro" id="IPR011012">
    <property type="entry name" value="Longin-like_dom_sf"/>
</dbReference>
<dbReference type="InterPro" id="IPR007233">
    <property type="entry name" value="TRAPPC"/>
</dbReference>
<dbReference type="PANTHER" id="PTHR23249">
    <property type="entry name" value="TRAFFICKING PROTEIN PARTICLE COMPLEX SUBUNIT"/>
    <property type="match status" value="1"/>
</dbReference>
<dbReference type="PANTHER" id="PTHR23249:SF15">
    <property type="entry name" value="TRAFFICKING PROTEIN PARTICLE COMPLEX SUBUNIT 4"/>
    <property type="match status" value="1"/>
</dbReference>
<dbReference type="Pfam" id="PF04099">
    <property type="entry name" value="Sybindin"/>
    <property type="match status" value="1"/>
</dbReference>
<dbReference type="SMART" id="SM01399">
    <property type="entry name" value="Sybindin"/>
    <property type="match status" value="1"/>
</dbReference>
<dbReference type="SUPFAM" id="SSF64356">
    <property type="entry name" value="SNARE-like"/>
    <property type="match status" value="1"/>
</dbReference>
<reference key="1">
    <citation type="submission" date="2004-11" db="EMBL/GenBank/DDBJ databases">
        <authorList>
            <consortium name="The German cDNA consortium"/>
        </authorList>
    </citation>
    <scope>NUCLEOTIDE SEQUENCE [LARGE SCALE MRNA]</scope>
    <source>
        <tissue>Brain cortex</tissue>
    </source>
</reference>
<gene>
    <name type="primary">TRAPPC4</name>
</gene>
<keyword id="KW-1003">Cell membrane</keyword>
<keyword id="KW-0256">Endoplasmic reticulum</keyword>
<keyword id="KW-0931">ER-Golgi transport</keyword>
<keyword id="KW-0333">Golgi apparatus</keyword>
<keyword id="KW-0472">Membrane</keyword>
<keyword id="KW-0628">Postsynaptic cell membrane</keyword>
<keyword id="KW-1185">Reference proteome</keyword>
<keyword id="KW-0770">Synapse</keyword>
<keyword id="KW-0813">Transport</keyword>
<sequence>MAIFSVYVVNKAGGLIYQLDSYAPRAEAEKTFSYPLDLLLKLHDERVLVAFGQRDGIRVGHAVLAINGMDVNGRYTADGKEVLEYLGNPANYPVSIRFGRPRLTSNEKLMLASMFHSLFAIGSQLSPEQGSSGIEMLETDTFKLHCYQTLTGIKFVVLADPRQAGIDSLLRKIYEIYSDFALKNPFYSLEMPIRCELFDQNLKLALEVAEKAGTFGPGS</sequence>
<name>TPPC4_PONAB</name>
<protein>
    <recommendedName>
        <fullName>Trafficking protein particle complex subunit 4</fullName>
    </recommendedName>
</protein>
<proteinExistence type="evidence at transcript level"/>
<feature type="chain" id="PRO_0000260211" description="Trafficking protein particle complex subunit 4">
    <location>
        <begin position="1"/>
        <end position="219"/>
    </location>
</feature>
<accession>Q5R9J9</accession>